<organism>
    <name type="scientific">Pseudomonas fluorescens (strain Pf0-1)</name>
    <dbReference type="NCBI Taxonomy" id="205922"/>
    <lineage>
        <taxon>Bacteria</taxon>
        <taxon>Pseudomonadati</taxon>
        <taxon>Pseudomonadota</taxon>
        <taxon>Gammaproteobacteria</taxon>
        <taxon>Pseudomonadales</taxon>
        <taxon>Pseudomonadaceae</taxon>
        <taxon>Pseudomonas</taxon>
    </lineage>
</organism>
<name>RSMH_PSEPF</name>
<comment type="function">
    <text evidence="1">Specifically methylates the N4 position of cytidine in position 1402 (C1402) of 16S rRNA.</text>
</comment>
<comment type="catalytic activity">
    <reaction evidence="1">
        <text>cytidine(1402) in 16S rRNA + S-adenosyl-L-methionine = N(4)-methylcytidine(1402) in 16S rRNA + S-adenosyl-L-homocysteine + H(+)</text>
        <dbReference type="Rhea" id="RHEA:42928"/>
        <dbReference type="Rhea" id="RHEA-COMP:10286"/>
        <dbReference type="Rhea" id="RHEA-COMP:10287"/>
        <dbReference type="ChEBI" id="CHEBI:15378"/>
        <dbReference type="ChEBI" id="CHEBI:57856"/>
        <dbReference type="ChEBI" id="CHEBI:59789"/>
        <dbReference type="ChEBI" id="CHEBI:74506"/>
        <dbReference type="ChEBI" id="CHEBI:82748"/>
        <dbReference type="EC" id="2.1.1.199"/>
    </reaction>
</comment>
<comment type="subcellular location">
    <subcellularLocation>
        <location evidence="1">Cytoplasm</location>
    </subcellularLocation>
</comment>
<comment type="similarity">
    <text evidence="1">Belongs to the methyltransferase superfamily. RsmH family.</text>
</comment>
<dbReference type="EC" id="2.1.1.199" evidence="1"/>
<dbReference type="EMBL" id="CP000094">
    <property type="protein sequence ID" value="ABA76418.1"/>
    <property type="molecule type" value="Genomic_DNA"/>
</dbReference>
<dbReference type="SMR" id="Q3K736"/>
<dbReference type="KEGG" id="pfo:Pfl01_4681"/>
<dbReference type="eggNOG" id="COG0275">
    <property type="taxonomic scope" value="Bacteria"/>
</dbReference>
<dbReference type="HOGENOM" id="CLU_038422_2_0_6"/>
<dbReference type="Proteomes" id="UP000002704">
    <property type="component" value="Chromosome"/>
</dbReference>
<dbReference type="GO" id="GO:0005737">
    <property type="term" value="C:cytoplasm"/>
    <property type="evidence" value="ECO:0007669"/>
    <property type="project" value="UniProtKB-SubCell"/>
</dbReference>
<dbReference type="GO" id="GO:0071424">
    <property type="term" value="F:rRNA (cytosine-N4-)-methyltransferase activity"/>
    <property type="evidence" value="ECO:0007669"/>
    <property type="project" value="UniProtKB-UniRule"/>
</dbReference>
<dbReference type="GO" id="GO:0070475">
    <property type="term" value="P:rRNA base methylation"/>
    <property type="evidence" value="ECO:0007669"/>
    <property type="project" value="UniProtKB-UniRule"/>
</dbReference>
<dbReference type="FunFam" id="1.10.150.170:FF:000003">
    <property type="entry name" value="Ribosomal RNA small subunit methyltransferase H"/>
    <property type="match status" value="1"/>
</dbReference>
<dbReference type="Gene3D" id="1.10.150.170">
    <property type="entry name" value="Putative methyltransferase TM0872, insert domain"/>
    <property type="match status" value="1"/>
</dbReference>
<dbReference type="Gene3D" id="3.40.50.150">
    <property type="entry name" value="Vaccinia Virus protein VP39"/>
    <property type="match status" value="1"/>
</dbReference>
<dbReference type="HAMAP" id="MF_01007">
    <property type="entry name" value="16SrRNA_methyltr_H"/>
    <property type="match status" value="1"/>
</dbReference>
<dbReference type="InterPro" id="IPR002903">
    <property type="entry name" value="RsmH"/>
</dbReference>
<dbReference type="InterPro" id="IPR023397">
    <property type="entry name" value="SAM-dep_MeTrfase_MraW_recog"/>
</dbReference>
<dbReference type="InterPro" id="IPR029063">
    <property type="entry name" value="SAM-dependent_MTases_sf"/>
</dbReference>
<dbReference type="NCBIfam" id="TIGR00006">
    <property type="entry name" value="16S rRNA (cytosine(1402)-N(4))-methyltransferase RsmH"/>
    <property type="match status" value="1"/>
</dbReference>
<dbReference type="PANTHER" id="PTHR11265:SF0">
    <property type="entry name" value="12S RRNA N4-METHYLCYTIDINE METHYLTRANSFERASE"/>
    <property type="match status" value="1"/>
</dbReference>
<dbReference type="PANTHER" id="PTHR11265">
    <property type="entry name" value="S-ADENOSYL-METHYLTRANSFERASE MRAW"/>
    <property type="match status" value="1"/>
</dbReference>
<dbReference type="Pfam" id="PF01795">
    <property type="entry name" value="Methyltransf_5"/>
    <property type="match status" value="1"/>
</dbReference>
<dbReference type="PIRSF" id="PIRSF004486">
    <property type="entry name" value="MraW"/>
    <property type="match status" value="1"/>
</dbReference>
<dbReference type="SUPFAM" id="SSF81799">
    <property type="entry name" value="Putative methyltransferase TM0872, insert domain"/>
    <property type="match status" value="1"/>
</dbReference>
<dbReference type="SUPFAM" id="SSF53335">
    <property type="entry name" value="S-adenosyl-L-methionine-dependent methyltransferases"/>
    <property type="match status" value="1"/>
</dbReference>
<keyword id="KW-0963">Cytoplasm</keyword>
<keyword id="KW-0489">Methyltransferase</keyword>
<keyword id="KW-0698">rRNA processing</keyword>
<keyword id="KW-0949">S-adenosyl-L-methionine</keyword>
<keyword id="KW-0808">Transferase</keyword>
<feature type="chain" id="PRO_0000223556" description="Ribosomal RNA small subunit methyltransferase H">
    <location>
        <begin position="1"/>
        <end position="315"/>
    </location>
</feature>
<feature type="binding site" evidence="1">
    <location>
        <begin position="37"/>
        <end position="39"/>
    </location>
    <ligand>
        <name>S-adenosyl-L-methionine</name>
        <dbReference type="ChEBI" id="CHEBI:59789"/>
    </ligand>
</feature>
<feature type="binding site" evidence="1">
    <location>
        <position position="57"/>
    </location>
    <ligand>
        <name>S-adenosyl-L-methionine</name>
        <dbReference type="ChEBI" id="CHEBI:59789"/>
    </ligand>
</feature>
<feature type="binding site" evidence="1">
    <location>
        <position position="83"/>
    </location>
    <ligand>
        <name>S-adenosyl-L-methionine</name>
        <dbReference type="ChEBI" id="CHEBI:59789"/>
    </ligand>
</feature>
<feature type="binding site" evidence="1">
    <location>
        <position position="105"/>
    </location>
    <ligand>
        <name>S-adenosyl-L-methionine</name>
        <dbReference type="ChEBI" id="CHEBI:59789"/>
    </ligand>
</feature>
<feature type="binding site" evidence="1">
    <location>
        <position position="112"/>
    </location>
    <ligand>
        <name>S-adenosyl-L-methionine</name>
        <dbReference type="ChEBI" id="CHEBI:59789"/>
    </ligand>
</feature>
<evidence type="ECO:0000255" key="1">
    <source>
        <dbReference type="HAMAP-Rule" id="MF_01007"/>
    </source>
</evidence>
<protein>
    <recommendedName>
        <fullName evidence="1">Ribosomal RNA small subunit methyltransferase H</fullName>
        <ecNumber evidence="1">2.1.1.199</ecNumber>
    </recommendedName>
    <alternativeName>
        <fullName evidence="1">16S rRNA m(4)C1402 methyltransferase</fullName>
    </alternativeName>
    <alternativeName>
        <fullName evidence="1">rRNA (cytosine-N(4)-)-methyltransferase RsmH</fullName>
    </alternativeName>
</protein>
<accession>Q3K736</accession>
<gene>
    <name evidence="1" type="primary">rsmH</name>
    <name type="synonym">mraW</name>
    <name type="ordered locus">Pfl01_4681</name>
</gene>
<reference key="1">
    <citation type="journal article" date="2009" name="Genome Biol.">
        <title>Genomic and genetic analyses of diversity and plant interactions of Pseudomonas fluorescens.</title>
        <authorList>
            <person name="Silby M.W."/>
            <person name="Cerdeno-Tarraga A.M."/>
            <person name="Vernikos G.S."/>
            <person name="Giddens S.R."/>
            <person name="Jackson R.W."/>
            <person name="Preston G.M."/>
            <person name="Zhang X.-X."/>
            <person name="Moon C.D."/>
            <person name="Gehrig S.M."/>
            <person name="Godfrey S.A.C."/>
            <person name="Knight C.G."/>
            <person name="Malone J.G."/>
            <person name="Robinson Z."/>
            <person name="Spiers A.J."/>
            <person name="Harris S."/>
            <person name="Challis G.L."/>
            <person name="Yaxley A.M."/>
            <person name="Harris D."/>
            <person name="Seeger K."/>
            <person name="Murphy L."/>
            <person name="Rutter S."/>
            <person name="Squares R."/>
            <person name="Quail M.A."/>
            <person name="Saunders E."/>
            <person name="Mavromatis K."/>
            <person name="Brettin T.S."/>
            <person name="Bentley S.D."/>
            <person name="Hothersall J."/>
            <person name="Stephens E."/>
            <person name="Thomas C.M."/>
            <person name="Parkhill J."/>
            <person name="Levy S.B."/>
            <person name="Rainey P.B."/>
            <person name="Thomson N.R."/>
        </authorList>
    </citation>
    <scope>NUCLEOTIDE SEQUENCE [LARGE SCALE GENOMIC DNA]</scope>
    <source>
        <strain>Pf0-1</strain>
    </source>
</reference>
<proteinExistence type="inferred from homology"/>
<sequence>MTIDSGFNHITVLLDEAVEALAVRPDGCYLDGTFGRGGHSRLILSKLGPDGRLIGFDKDPQAIATGQTLAAEDGRFVVVQRSFAELGSVVAERGLTGKVSGILLDLGVSSPQLDDAERGFSFLNDGPLDMRMDPSRGISAAEFVNTAPVEEIARVFKEYGEERFSGRMARAVVERRDVTPFERTADLAEVLKVANPAWEKGKNPATRAFQGLRIQVNNELGDLEAGLEAALECLEVGGRLVVISFHSLEDRIVKLFMRKLVKGEADNLPRNLPVRHVAFEPKIKVHGKAQTASDAELKANPRSRSAVMRVAEKLR</sequence>